<accession>P0DSW0</accession>
<accession>P33877</accession>
<feature type="chain" id="PRO_0000448170" description="Protein OPG200">
    <location>
        <begin position="1"/>
        <end position="149"/>
    </location>
</feature>
<keyword id="KW-0244">Early protein</keyword>
<keyword id="KW-0945">Host-virus interaction</keyword>
<keyword id="KW-1100">Inhibition of host NF-kappa-B by virus</keyword>
<gene>
    <name type="primary">OPG200</name>
    <name type="ORF">B13R</name>
    <name type="ORF">B14R</name>
    <name type="ORF">B15R</name>
</gene>
<proteinExistence type="inferred from homology"/>
<protein>
    <recommendedName>
        <fullName>Protein OPG200</fullName>
    </recommendedName>
</protein>
<reference key="1">
    <citation type="journal article" date="1993" name="Nature">
        <title>Potential virulence determinants in terminal regions of variola smallpox virus genome.</title>
        <authorList>
            <person name="Massung R.F."/>
            <person name="Esposito J.J."/>
            <person name="Liu L.I."/>
            <person name="Qi J."/>
            <person name="Utterback T.R."/>
            <person name="Knight J.C."/>
            <person name="Aubin L."/>
            <person name="Yuran T.E."/>
            <person name="Parsons J.M."/>
            <person name="Loparev V.N."/>
            <person name="Selivanov N.A."/>
            <person name="Cavallaro K.F."/>
            <person name="Kerlavage A.R."/>
            <person name="Mahy B.W.J."/>
            <person name="Venter J.C."/>
        </authorList>
    </citation>
    <scope>NUCLEOTIDE SEQUENCE [GENOMIC DNA]</scope>
    <source>
        <strain>Bangladesh-1975</strain>
    </source>
</reference>
<reference key="2">
    <citation type="submission" date="1994-12" db="EMBL/GenBank/DDBJ databases">
        <authorList>
            <person name="Massung R.F."/>
            <person name="Loparev V.N."/>
            <person name="Knight J.C."/>
            <person name="Chizhikov V.E."/>
            <person name="Parsons J.M."/>
            <person name="Totmenin A.V."/>
            <person name="Shchelkunov S.N."/>
            <person name="Esposito J.J."/>
        </authorList>
    </citation>
    <scope>NUCLEOTIDE SEQUENCE [GENOMIC DNA]</scope>
    <source>
        <strain>Somalia-1977</strain>
    </source>
</reference>
<sequence length="149" mass="17369">MTANFSTHVFSPQHCGCDRLTSIDDVRQCLTEYIYWSSYAYRNRQCAGQLYSTLLSFRDDAESVFIDVRELVKNMPWDDVKDCVEIIRCYIPDEQKTIREISAIIGLCAYAATYWGGEDHPTSNSLNALFVMLKMLNYVDYNIIFRRMN</sequence>
<comment type="function">
    <text evidence="1">Contributes to virulence by binding to the host IKBKB subunit of the IKK complex and preventing host NF-kappa-B activation in response to pro-inflammatory stimuli such as TNF-alpha or IL1B. Mechanistically, sterically hinders the direct contact between the kinase domains of IKBKB in the IKK complex containing IKBKB, CHUK/IKKA and NEMO.</text>
</comment>
<comment type="subunit">
    <text evidence="1">Homodimers. Interacts with host IKBKB; this interaction inhibits host NF-kappa-B activation.</text>
</comment>
<comment type="similarity">
    <text evidence="2">Belongs to the orthopoxvirus OPG200 family.</text>
</comment>
<name>PG200_VARV</name>
<dbReference type="EMBL" id="L22579">
    <property type="protein sequence ID" value="AAA60922.1"/>
    <property type="molecule type" value="Genomic_DNA"/>
</dbReference>
<dbReference type="EMBL" id="U18341">
    <property type="protein sequence ID" value="AAA69454.1"/>
    <property type="molecule type" value="Genomic_DNA"/>
</dbReference>
<dbReference type="PIR" id="E36856">
    <property type="entry name" value="E36856"/>
</dbReference>
<dbReference type="PIR" id="T28612">
    <property type="entry name" value="T28612"/>
</dbReference>
<dbReference type="RefSeq" id="NP_042226.1">
    <property type="nucleotide sequence ID" value="NC_001611.1"/>
</dbReference>
<dbReference type="SMR" id="P0DSW0"/>
<dbReference type="GeneID" id="1486544"/>
<dbReference type="KEGG" id="vg:1486544"/>
<dbReference type="Proteomes" id="UP000119805">
    <property type="component" value="Segment"/>
</dbReference>
<dbReference type="GO" id="GO:0085034">
    <property type="term" value="P:symbiont-mediated suppression of host NF-kappaB cascade"/>
    <property type="evidence" value="ECO:0007669"/>
    <property type="project" value="UniProtKB-KW"/>
</dbReference>
<dbReference type="Gene3D" id="1.10.437.20">
    <property type="entry name" value="dsDNA poxvirus"/>
    <property type="match status" value="1"/>
</dbReference>
<dbReference type="InterPro" id="IPR011212">
    <property type="entry name" value="Poxvirus_B14/B22/C16"/>
</dbReference>
<dbReference type="InterPro" id="IPR022819">
    <property type="entry name" value="Poxvirus_Bcl-2-like"/>
</dbReference>
<dbReference type="InterPro" id="IPR043018">
    <property type="entry name" value="Poxvirus_sf"/>
</dbReference>
<dbReference type="Pfam" id="PF06227">
    <property type="entry name" value="Poxv_Bcl-2-like"/>
    <property type="match status" value="1"/>
</dbReference>
<dbReference type="PIRSF" id="PIRSF017324">
    <property type="entry name" value="UCP017324"/>
    <property type="match status" value="1"/>
</dbReference>
<evidence type="ECO:0000250" key="1">
    <source>
        <dbReference type="UniProtKB" id="P24772"/>
    </source>
</evidence>
<evidence type="ECO:0000305" key="2"/>
<organism>
    <name type="scientific">Variola virus</name>
    <dbReference type="NCBI Taxonomy" id="10255"/>
    <lineage>
        <taxon>Viruses</taxon>
        <taxon>Varidnaviria</taxon>
        <taxon>Bamfordvirae</taxon>
        <taxon>Nucleocytoviricota</taxon>
        <taxon>Pokkesviricetes</taxon>
        <taxon>Chitovirales</taxon>
        <taxon>Poxviridae</taxon>
        <taxon>Chordopoxvirinae</taxon>
        <taxon>Orthopoxvirus</taxon>
    </lineage>
</organism>
<organismHost>
    <name type="scientific">Homo sapiens</name>
    <name type="common">Human</name>
    <dbReference type="NCBI Taxonomy" id="9606"/>
</organismHost>